<feature type="chain" id="PRO_1000062159" description="Phosphoribosylformylglycinamidine cyclo-ligase">
    <location>
        <begin position="1"/>
        <end position="345"/>
    </location>
</feature>
<protein>
    <recommendedName>
        <fullName evidence="1">Phosphoribosylformylglycinamidine cyclo-ligase</fullName>
        <ecNumber evidence="1">6.3.3.1</ecNumber>
    </recommendedName>
    <alternativeName>
        <fullName evidence="1">AIR synthase</fullName>
    </alternativeName>
    <alternativeName>
        <fullName evidence="1">AIRS</fullName>
    </alternativeName>
    <alternativeName>
        <fullName evidence="1">Phosphoribosyl-aminoimidazole synthetase</fullName>
    </alternativeName>
</protein>
<sequence length="345" mass="36873">MTDKTSLSYKDAGVDIDAGNALVGRIKGVVKKTRRPEVMGGLGGFGALCALPQKYREPVLVSGTDGVGTKLRLAMDLKRHDTIGIDLVAMCVNDLVVQGAEPLFFLDYYATGKLDVDTASAVISGIAEGCLQSGCSLVGGETAEMPGMYHGEDYDVAGFCVGVVEKSEIIDGSKVSDGDVLIALGSSGPHSNGYSLVRKILEVSGCDPQTTELDGKPLADHLLAPTRIYVKSVLELIEKVDVHAIAHLTGGGFWENIPRVLPDNTQAVIDESSWQWPEVFNWLQTAGNVERHEMYRTFNCGVGMIIALPAPEVDKALALLNANGENAWKIGIIKASDSEQRVVIE</sequence>
<keyword id="KW-0067">ATP-binding</keyword>
<keyword id="KW-0963">Cytoplasm</keyword>
<keyword id="KW-0436">Ligase</keyword>
<keyword id="KW-0547">Nucleotide-binding</keyword>
<keyword id="KW-0658">Purine biosynthesis</keyword>
<gene>
    <name evidence="1" type="primary">purM</name>
    <name type="ordered locus">EcHS_A2634</name>
</gene>
<organism>
    <name type="scientific">Escherichia coli O9:H4 (strain HS)</name>
    <dbReference type="NCBI Taxonomy" id="331112"/>
    <lineage>
        <taxon>Bacteria</taxon>
        <taxon>Pseudomonadati</taxon>
        <taxon>Pseudomonadota</taxon>
        <taxon>Gammaproteobacteria</taxon>
        <taxon>Enterobacterales</taxon>
        <taxon>Enterobacteriaceae</taxon>
        <taxon>Escherichia</taxon>
    </lineage>
</organism>
<accession>A8A2Z1</accession>
<evidence type="ECO:0000255" key="1">
    <source>
        <dbReference type="HAMAP-Rule" id="MF_00741"/>
    </source>
</evidence>
<reference key="1">
    <citation type="journal article" date="2008" name="J. Bacteriol.">
        <title>The pangenome structure of Escherichia coli: comparative genomic analysis of E. coli commensal and pathogenic isolates.</title>
        <authorList>
            <person name="Rasko D.A."/>
            <person name="Rosovitz M.J."/>
            <person name="Myers G.S.A."/>
            <person name="Mongodin E.F."/>
            <person name="Fricke W.F."/>
            <person name="Gajer P."/>
            <person name="Crabtree J."/>
            <person name="Sebaihia M."/>
            <person name="Thomson N.R."/>
            <person name="Chaudhuri R."/>
            <person name="Henderson I.R."/>
            <person name="Sperandio V."/>
            <person name="Ravel J."/>
        </authorList>
    </citation>
    <scope>NUCLEOTIDE SEQUENCE [LARGE SCALE GENOMIC DNA]</scope>
    <source>
        <strain>HS</strain>
    </source>
</reference>
<name>PUR5_ECOHS</name>
<dbReference type="EC" id="6.3.3.1" evidence="1"/>
<dbReference type="EMBL" id="CP000802">
    <property type="protein sequence ID" value="ABV06895.1"/>
    <property type="molecule type" value="Genomic_DNA"/>
</dbReference>
<dbReference type="RefSeq" id="WP_001295474.1">
    <property type="nucleotide sequence ID" value="NC_009800.1"/>
</dbReference>
<dbReference type="SMR" id="A8A2Z1"/>
<dbReference type="GeneID" id="93774637"/>
<dbReference type="KEGG" id="ecx:EcHS_A2634"/>
<dbReference type="HOGENOM" id="CLU_047116_0_0_6"/>
<dbReference type="UniPathway" id="UPA00074">
    <property type="reaction ID" value="UER00129"/>
</dbReference>
<dbReference type="GO" id="GO:0005829">
    <property type="term" value="C:cytosol"/>
    <property type="evidence" value="ECO:0007669"/>
    <property type="project" value="TreeGrafter"/>
</dbReference>
<dbReference type="GO" id="GO:0005524">
    <property type="term" value="F:ATP binding"/>
    <property type="evidence" value="ECO:0007669"/>
    <property type="project" value="UniProtKB-KW"/>
</dbReference>
<dbReference type="GO" id="GO:0004637">
    <property type="term" value="F:phosphoribosylamine-glycine ligase activity"/>
    <property type="evidence" value="ECO:0007669"/>
    <property type="project" value="TreeGrafter"/>
</dbReference>
<dbReference type="GO" id="GO:0004641">
    <property type="term" value="F:phosphoribosylformylglycinamidine cyclo-ligase activity"/>
    <property type="evidence" value="ECO:0007669"/>
    <property type="project" value="UniProtKB-UniRule"/>
</dbReference>
<dbReference type="GO" id="GO:0006189">
    <property type="term" value="P:'de novo' IMP biosynthetic process"/>
    <property type="evidence" value="ECO:0007669"/>
    <property type="project" value="UniProtKB-UniRule"/>
</dbReference>
<dbReference type="GO" id="GO:0046084">
    <property type="term" value="P:adenine biosynthetic process"/>
    <property type="evidence" value="ECO:0007669"/>
    <property type="project" value="TreeGrafter"/>
</dbReference>
<dbReference type="CDD" id="cd02196">
    <property type="entry name" value="PurM"/>
    <property type="match status" value="1"/>
</dbReference>
<dbReference type="FunFam" id="3.30.1330.10:FF:000001">
    <property type="entry name" value="Phosphoribosylformylglycinamidine cyclo-ligase"/>
    <property type="match status" value="1"/>
</dbReference>
<dbReference type="FunFam" id="3.90.650.10:FF:000001">
    <property type="entry name" value="Phosphoribosylformylglycinamidine cyclo-ligase"/>
    <property type="match status" value="1"/>
</dbReference>
<dbReference type="Gene3D" id="3.90.650.10">
    <property type="entry name" value="PurM-like C-terminal domain"/>
    <property type="match status" value="1"/>
</dbReference>
<dbReference type="Gene3D" id="3.30.1330.10">
    <property type="entry name" value="PurM-like, N-terminal domain"/>
    <property type="match status" value="1"/>
</dbReference>
<dbReference type="HAMAP" id="MF_00741">
    <property type="entry name" value="AIRS"/>
    <property type="match status" value="1"/>
</dbReference>
<dbReference type="InterPro" id="IPR010918">
    <property type="entry name" value="PurM-like_C_dom"/>
</dbReference>
<dbReference type="InterPro" id="IPR036676">
    <property type="entry name" value="PurM-like_C_sf"/>
</dbReference>
<dbReference type="InterPro" id="IPR016188">
    <property type="entry name" value="PurM-like_N"/>
</dbReference>
<dbReference type="InterPro" id="IPR036921">
    <property type="entry name" value="PurM-like_N_sf"/>
</dbReference>
<dbReference type="InterPro" id="IPR004733">
    <property type="entry name" value="PurM_cligase"/>
</dbReference>
<dbReference type="NCBIfam" id="TIGR00878">
    <property type="entry name" value="purM"/>
    <property type="match status" value="1"/>
</dbReference>
<dbReference type="PANTHER" id="PTHR10520:SF12">
    <property type="entry name" value="TRIFUNCTIONAL PURINE BIOSYNTHETIC PROTEIN ADENOSINE-3"/>
    <property type="match status" value="1"/>
</dbReference>
<dbReference type="PANTHER" id="PTHR10520">
    <property type="entry name" value="TRIFUNCTIONAL PURINE BIOSYNTHETIC PROTEIN ADENOSINE-3-RELATED"/>
    <property type="match status" value="1"/>
</dbReference>
<dbReference type="Pfam" id="PF00586">
    <property type="entry name" value="AIRS"/>
    <property type="match status" value="1"/>
</dbReference>
<dbReference type="Pfam" id="PF02769">
    <property type="entry name" value="AIRS_C"/>
    <property type="match status" value="1"/>
</dbReference>
<dbReference type="SUPFAM" id="SSF56042">
    <property type="entry name" value="PurM C-terminal domain-like"/>
    <property type="match status" value="1"/>
</dbReference>
<dbReference type="SUPFAM" id="SSF55326">
    <property type="entry name" value="PurM N-terminal domain-like"/>
    <property type="match status" value="1"/>
</dbReference>
<proteinExistence type="inferred from homology"/>
<comment type="catalytic activity">
    <reaction evidence="1">
        <text>2-formamido-N(1)-(5-O-phospho-beta-D-ribosyl)acetamidine + ATP = 5-amino-1-(5-phospho-beta-D-ribosyl)imidazole + ADP + phosphate + H(+)</text>
        <dbReference type="Rhea" id="RHEA:23032"/>
        <dbReference type="ChEBI" id="CHEBI:15378"/>
        <dbReference type="ChEBI" id="CHEBI:30616"/>
        <dbReference type="ChEBI" id="CHEBI:43474"/>
        <dbReference type="ChEBI" id="CHEBI:137981"/>
        <dbReference type="ChEBI" id="CHEBI:147287"/>
        <dbReference type="ChEBI" id="CHEBI:456216"/>
        <dbReference type="EC" id="6.3.3.1"/>
    </reaction>
</comment>
<comment type="pathway">
    <text evidence="1">Purine metabolism; IMP biosynthesis via de novo pathway; 5-amino-1-(5-phospho-D-ribosyl)imidazole from N(2)-formyl-N(1)-(5-phospho-D-ribosyl)glycinamide: step 2/2.</text>
</comment>
<comment type="subcellular location">
    <subcellularLocation>
        <location evidence="1">Cytoplasm</location>
    </subcellularLocation>
</comment>
<comment type="similarity">
    <text evidence="1">Belongs to the AIR synthase family.</text>
</comment>